<organism>
    <name type="scientific">Homo sapiens</name>
    <name type="common">Human</name>
    <dbReference type="NCBI Taxonomy" id="9606"/>
    <lineage>
        <taxon>Eukaryota</taxon>
        <taxon>Metazoa</taxon>
        <taxon>Chordata</taxon>
        <taxon>Craniata</taxon>
        <taxon>Vertebrata</taxon>
        <taxon>Euteleostomi</taxon>
        <taxon>Mammalia</taxon>
        <taxon>Eutheria</taxon>
        <taxon>Euarchontoglires</taxon>
        <taxon>Primates</taxon>
        <taxon>Haplorrhini</taxon>
        <taxon>Catarrhini</taxon>
        <taxon>Hominidae</taxon>
        <taxon>Homo</taxon>
    </lineage>
</organism>
<dbReference type="EMBL" id="AK057655">
    <property type="protein sequence ID" value="BAB71544.1"/>
    <property type="status" value="ALT_INIT"/>
    <property type="molecule type" value="mRNA"/>
</dbReference>
<dbReference type="EMBL" id="AK057931">
    <property type="protein sequence ID" value="BAB71615.1"/>
    <property type="molecule type" value="mRNA"/>
</dbReference>
<dbReference type="EMBL" id="AL035530">
    <property type="status" value="NOT_ANNOTATED_CDS"/>
    <property type="molecule type" value="Genomic_DNA"/>
</dbReference>
<dbReference type="EMBL" id="CH471051">
    <property type="protein sequence ID" value="EAW47643.1"/>
    <property type="molecule type" value="Genomic_DNA"/>
</dbReference>
<dbReference type="EMBL" id="BC050604">
    <property type="protein sequence ID" value="AAH50604.1"/>
    <property type="molecule type" value="mRNA"/>
</dbReference>
<dbReference type="EMBL" id="AF353618">
    <property type="protein sequence ID" value="AAK26432.1"/>
    <property type="status" value="ALT_INIT"/>
    <property type="molecule type" value="mRNA"/>
</dbReference>
<dbReference type="RefSeq" id="NP_001333347.1">
    <molecule id="Q86UC2-2"/>
    <property type="nucleotide sequence ID" value="NM_001346418.1"/>
</dbReference>
<dbReference type="RefSeq" id="NP_114130.3">
    <property type="nucleotide sequence ID" value="NM_031924.5"/>
</dbReference>
<dbReference type="PDB" id="8J07">
    <property type="method" value="EM"/>
    <property type="resolution" value="4.10 A"/>
    <property type="chains" value="E/F/e/f=1-560"/>
</dbReference>
<dbReference type="PDBsum" id="8J07"/>
<dbReference type="EMDB" id="EMD-35888"/>
<dbReference type="SMR" id="Q86UC2"/>
<dbReference type="BioGRID" id="123776">
    <property type="interactions" value="9"/>
</dbReference>
<dbReference type="ComplexPortal" id="CPX-8163">
    <property type="entry name" value="Radial spoke complex, ciliiar variant"/>
</dbReference>
<dbReference type="ComplexPortal" id="CPX-8164">
    <property type="entry name" value="Radial spoke complex, flagellar variant"/>
</dbReference>
<dbReference type="FunCoup" id="Q86UC2">
    <property type="interactions" value="68"/>
</dbReference>
<dbReference type="IntAct" id="Q86UC2">
    <property type="interactions" value="8"/>
</dbReference>
<dbReference type="STRING" id="9606.ENSP00000252655"/>
<dbReference type="GlyGen" id="Q86UC2">
    <property type="glycosylation" value="1 site"/>
</dbReference>
<dbReference type="iPTMnet" id="Q86UC2"/>
<dbReference type="PhosphoSitePlus" id="Q86UC2"/>
<dbReference type="BioMuta" id="RSPH3"/>
<dbReference type="DMDM" id="74750415"/>
<dbReference type="jPOST" id="Q86UC2"/>
<dbReference type="MassIVE" id="Q86UC2"/>
<dbReference type="PaxDb" id="9606-ENSP00000252655"/>
<dbReference type="PeptideAtlas" id="Q86UC2"/>
<dbReference type="ProteomicsDB" id="69797">
    <molecule id="Q86UC2-1"/>
</dbReference>
<dbReference type="ProteomicsDB" id="69798">
    <molecule id="Q86UC2-2"/>
</dbReference>
<dbReference type="DNASU" id="83861"/>
<dbReference type="GeneID" id="83861"/>
<dbReference type="KEGG" id="hsa:83861"/>
<dbReference type="UCSC" id="uc003qrx.4">
    <molecule id="Q86UC2-1"/>
    <property type="organism name" value="human"/>
</dbReference>
<dbReference type="AGR" id="HGNC:21054"/>
<dbReference type="CTD" id="83861"/>
<dbReference type="DisGeNET" id="83861"/>
<dbReference type="GeneCards" id="RSPH3"/>
<dbReference type="GeneReviews" id="RSPH3"/>
<dbReference type="HGNC" id="HGNC:21054">
    <property type="gene designation" value="RSPH3"/>
</dbReference>
<dbReference type="MalaCards" id="RSPH3"/>
<dbReference type="MIM" id="615876">
    <property type="type" value="gene"/>
</dbReference>
<dbReference type="MIM" id="616481">
    <property type="type" value="phenotype"/>
</dbReference>
<dbReference type="neXtProt" id="NX_Q86UC2"/>
<dbReference type="Orphanet" id="244">
    <property type="disease" value="Primary ciliary dyskinesia"/>
</dbReference>
<dbReference type="PharmGKB" id="PA162402248"/>
<dbReference type="VEuPathDB" id="HostDB:ENSG00000130363"/>
<dbReference type="eggNOG" id="ENOG502QQSZ">
    <property type="taxonomic scope" value="Eukaryota"/>
</dbReference>
<dbReference type="InParanoid" id="Q86UC2"/>
<dbReference type="OrthoDB" id="313308at2759"/>
<dbReference type="PAN-GO" id="Q86UC2">
    <property type="GO annotations" value="1 GO annotation based on evolutionary models"/>
</dbReference>
<dbReference type="PhylomeDB" id="Q86UC2"/>
<dbReference type="TreeFam" id="TF324184"/>
<dbReference type="PathwayCommons" id="Q86UC2"/>
<dbReference type="SignaLink" id="Q86UC2"/>
<dbReference type="SIGNOR" id="Q86UC2"/>
<dbReference type="BioGRID-ORCS" id="83861">
    <property type="hits" value="14 hits in 1123 CRISPR screens"/>
</dbReference>
<dbReference type="CD-CODE" id="B5B9A610">
    <property type="entry name" value="PML body"/>
</dbReference>
<dbReference type="ChiTaRS" id="RSPH3">
    <property type="organism name" value="human"/>
</dbReference>
<dbReference type="GeneWiki" id="RSPH3"/>
<dbReference type="GenomeRNAi" id="83861"/>
<dbReference type="Pharos" id="Q86UC2">
    <property type="development level" value="Tdark"/>
</dbReference>
<dbReference type="PRO" id="PR:Q86UC2"/>
<dbReference type="Proteomes" id="UP000005640">
    <property type="component" value="Chromosome 6"/>
</dbReference>
<dbReference type="RNAct" id="Q86UC2">
    <property type="molecule type" value="protein"/>
</dbReference>
<dbReference type="GO" id="GO:0097729">
    <property type="term" value="C:9+2 motile cilium"/>
    <property type="evidence" value="ECO:0000250"/>
    <property type="project" value="UniProtKB"/>
</dbReference>
<dbReference type="GO" id="GO:0005929">
    <property type="term" value="C:cilium"/>
    <property type="evidence" value="ECO:0000314"/>
    <property type="project" value="UniProtKB"/>
</dbReference>
<dbReference type="GO" id="GO:0001535">
    <property type="term" value="C:radial spoke head"/>
    <property type="evidence" value="ECO:0000250"/>
    <property type="project" value="UniProtKB"/>
</dbReference>
<dbReference type="InterPro" id="IPR009290">
    <property type="entry name" value="Radial_spoke_3"/>
</dbReference>
<dbReference type="PANTHER" id="PTHR21648">
    <property type="entry name" value="FLAGELLAR RADIAL SPOKE PROTEIN 3"/>
    <property type="match status" value="1"/>
</dbReference>
<dbReference type="PANTHER" id="PTHR21648:SF0">
    <property type="entry name" value="RADIAL SPOKE HEAD PROTEIN 3 HOMOLOG"/>
    <property type="match status" value="1"/>
</dbReference>
<dbReference type="Pfam" id="PF06098">
    <property type="entry name" value="Radial_spoke_3"/>
    <property type="match status" value="1"/>
</dbReference>
<gene>
    <name type="primary">RSPH3</name>
    <name type="synonym">RSHL2</name>
    <name type="synonym">RSP3</name>
</gene>
<keyword id="KW-0002">3D-structure</keyword>
<keyword id="KW-0025">Alternative splicing</keyword>
<keyword id="KW-0966">Cell projection</keyword>
<keyword id="KW-1186">Ciliopathy</keyword>
<keyword id="KW-0969">Cilium</keyword>
<keyword id="KW-0175">Coiled coil</keyword>
<keyword id="KW-0963">Cytoplasm</keyword>
<keyword id="KW-0206">Cytoskeleton</keyword>
<keyword id="KW-0282">Flagellum</keyword>
<keyword id="KW-0597">Phosphoprotein</keyword>
<keyword id="KW-0990">Primary ciliary dyskinesia</keyword>
<keyword id="KW-1267">Proteomics identification</keyword>
<keyword id="KW-1185">Reference proteome</keyword>
<protein>
    <recommendedName>
        <fullName>Radial spoke head protein 3 homolog</fullName>
    </recommendedName>
    <alternativeName>
        <fullName>A-kinase anchor protein RSPH3</fullName>
    </alternativeName>
    <alternativeName>
        <fullName>Radial spoke head-like protein 2</fullName>
    </alternativeName>
</protein>
<sequence length="560" mass="63687">MTVKPAKAASLARNLAKRRRTYLGGAAGRSQEPEVPCAAVLPGKPGDRNCPEFPPPDRTLGCWATDAAPAAGLCGAGSEPSIAPTSCAGNLPSRPPPLLSPLLASRNPCPWHYLHLSGSHNTLAPTCFKAKLHRKRGSQPPDMASALTDRTSRAPSTYTYTSRPRALPCQRSRYRDSLTQPDEEPMHYGNIMYDRRVIRGNTYALQTGPLLGRPDSLELQRQREARKRALARKQAQEQLRPQTPEPVEGRKHVDVQTELYLEEIADRIIEVDMECQTDAFLDRPPTPLFIPAKTGKDVATQILEGELFDFDLEVKPVLEVLVGKTIEQSLLEVMEEEELANLRASQREYEELRNSERAEVQRLEEQERRHREEKERRKKQQWEIMHKHNETSQKIAARAFAQRYLADLLPSVFGSLRDSGYFYDPIERDIEIGFLPWLMNEVEKTMEYSMVGRTVLDMLIREVVEKRLCMYEHGEDTHQSPEPEDEPGGPGAMTESLEASEFLEQSMSQTRELLLDGGYLQRTTYDRRSSQERKFMEERELLGQDEETAMRKSLGEEELS</sequence>
<feature type="chain" id="PRO_0000313741" description="Radial spoke head protein 3 homolog">
    <location>
        <begin position="1"/>
        <end position="560"/>
    </location>
</feature>
<feature type="region of interest" description="Disordered" evidence="3">
    <location>
        <begin position="134"/>
        <end position="186"/>
    </location>
</feature>
<feature type="region of interest" description="Disordered" evidence="3">
    <location>
        <begin position="225"/>
        <end position="249"/>
    </location>
</feature>
<feature type="region of interest" description="Disordered" evidence="3">
    <location>
        <begin position="354"/>
        <end position="375"/>
    </location>
</feature>
<feature type="region of interest" description="Disordered" evidence="3">
    <location>
        <begin position="473"/>
        <end position="498"/>
    </location>
</feature>
<feature type="region of interest" description="Disordered" evidence="3">
    <location>
        <begin position="526"/>
        <end position="560"/>
    </location>
</feature>
<feature type="coiled-coil region" evidence="2">
    <location>
        <begin position="215"/>
        <end position="239"/>
    </location>
</feature>
<feature type="coiled-coil region" evidence="2">
    <location>
        <begin position="331"/>
        <end position="385"/>
    </location>
</feature>
<feature type="compositionally biased region" description="Polar residues" evidence="3">
    <location>
        <begin position="153"/>
        <end position="162"/>
    </location>
</feature>
<feature type="modified residue" description="Phosphothreonine; by MAPK1" evidence="4">
    <location>
        <position position="286"/>
    </location>
</feature>
<feature type="splice variant" id="VSP_030128" description="In isoform 2." evidence="9">
    <location>
        <begin position="212"/>
        <end position="307"/>
    </location>
</feature>
<feature type="sequence variant" id="VAR_037720" description="In dbSNP:rs16889320.">
    <original>N</original>
    <variation>S</variation>
    <location>
        <position position="201"/>
    </location>
</feature>
<feature type="sequence variant" id="VAR_037721" description="In dbSNP:rs34582178.">
    <original>R</original>
    <variation>Q</variation>
    <location>
        <position position="213"/>
    </location>
</feature>
<feature type="sequence variant" id="VAR_037722" description="In dbSNP:rs10455840.">
    <original>R</original>
    <variation>Q</variation>
    <location>
        <position position="398"/>
    </location>
</feature>
<feature type="sequence variant" id="VAR_037723" description="In dbSNP:rs768994.">
    <original>M</original>
    <variation>T</variation>
    <location>
        <position position="439"/>
    </location>
</feature>
<feature type="sequence variant" id="VAR_037724" description="In dbSNP:rs12204826.">
    <original>E</original>
    <variation>K</variation>
    <location>
        <position position="484"/>
    </location>
</feature>
<feature type="sequence variant" id="VAR_037725" description="In dbSNP:rs3756987.">
    <original>G</original>
    <variation>D</variation>
    <location>
        <position position="518"/>
    </location>
</feature>
<feature type="sequence conflict" description="In Ref. 1; BAB71615." evidence="10" ref="1">
    <original>L</original>
    <variation>S</variation>
    <location>
        <position position="99"/>
    </location>
</feature>
<comment type="function">
    <text evidence="1 4">Functions as part of axonemal radial spoke complexes that play an important part in the motility of sperm and cilia (By similarity). Functions as a protein kinase A-anchoring protein that scaffolds the cAMP-dependent protein kinase holoenzyme. May serve as a point of convergence for MAPK and PKA signaling in cilia (PubMed:19684019).</text>
</comment>
<comment type="subunit">
    <text evidence="1 4 7 8">Component of the axonemal radial spoke 1 (RS1) and 2 (RS2) complexes, at least composed of spoke head proteins RSPH1, RSPH3, RSPH9 and the cilia-specific component RSPH4A or sperm-specific component RSPH6A, spoke stalk proteins RSPH14, DNAJB13, DYDC1, ROPN1L and NME5, and the RS1 complex-specific anchor protein IQUB (By similarity). Interacts with IQUB (PubMed:36355624). Interacts with phosphorylated MAPK1 (PubMed:19684019). Interacts with MEK1 (PubMed:19684019). Interacts with PKA regulatory subunits PRKAR1A and PRKAR1B (PubMed:19684019). Interacts with RSPH1 (By similarity). Interacts with RSPH4A (By similarity). Interacts with RSPH6A (By similarity). Interacts with RSPH9 (By similarity). Interacts with LRRC23 (PubMed:37804054).</text>
</comment>
<comment type="interaction">
    <interactant intactId="EBI-6873025">
        <id>Q86UC2</id>
    </interactant>
    <interactant intactId="EBI-744973">
        <id>Q9C005</id>
        <label>DPY30</label>
    </interactant>
    <organismsDiffer>false</organismsDiffer>
    <experiments>3</experiments>
</comment>
<comment type="interaction">
    <interactant intactId="EBI-6873025">
        <id>Q86UC2</id>
    </interactant>
    <interactant intactId="EBI-11986315">
        <id>Q9H5Z6-2</id>
        <label>FAM124B</label>
    </interactant>
    <organismsDiffer>false</organismsDiffer>
    <experiments>3</experiments>
</comment>
<comment type="interaction">
    <interactant intactId="EBI-6873025">
        <id>Q86UC2</id>
    </interactant>
    <interactant intactId="EBI-744248">
        <id>P40692</id>
        <label>MLH1</label>
    </interactant>
    <organismsDiffer>false</organismsDiffer>
    <experiments>3</experiments>
</comment>
<comment type="interaction">
    <interactant intactId="EBI-6873025">
        <id>Q86UC2</id>
    </interactant>
    <interactant intactId="EBI-476431">
        <id>P10644</id>
        <label>PRKAR1A</label>
    </interactant>
    <organismsDiffer>false</organismsDiffer>
    <experiments>3</experiments>
</comment>
<comment type="interaction">
    <interactant intactId="EBI-6873025">
        <id>Q86UC2</id>
    </interactant>
    <interactant intactId="EBI-9033237">
        <id>Q96C74</id>
        <label>ROPN1L</label>
    </interactant>
    <organismsDiffer>false</organismsDiffer>
    <experiments>7</experiments>
</comment>
<comment type="interaction">
    <interactant intactId="EBI-6873025">
        <id>Q86UC2</id>
    </interactant>
    <interactant intactId="EBI-748350">
        <id>Q9UHP6</id>
        <label>RSPH14</label>
    </interactant>
    <organismsDiffer>false</organismsDiffer>
    <experiments>3</experiments>
</comment>
<comment type="subcellular location">
    <subcellularLocation>
        <location evidence="6">Cytoplasm</location>
        <location evidence="6">Cytoskeleton</location>
        <location evidence="6">Cilium axoneme</location>
    </subcellularLocation>
    <subcellularLocation>
        <location evidence="10">Cytoplasm</location>
        <location evidence="10">Cytoskeleton</location>
        <location evidence="10">Flagellum axoneme</location>
    </subcellularLocation>
</comment>
<comment type="alternative products">
    <event type="alternative splicing"/>
    <isoform>
        <id>Q86UC2-1</id>
        <name>1</name>
        <sequence type="displayed"/>
    </isoform>
    <isoform>
        <id>Q86UC2-2</id>
        <name>2</name>
        <sequence type="described" ref="VSP_030128"/>
    </isoform>
</comment>
<comment type="disease" evidence="5">
    <disease id="DI-04489">
        <name>Ciliary dyskinesia, primary, 32</name>
        <acronym>CILD32</acronym>
        <description>A disorder characterized by abnormalities of motile cilia. Respiratory infections leading to chronic inflammation and bronchiectasis are recurrent, due to defects in the respiratory cilia.</description>
        <dbReference type="MIM" id="616481"/>
    </disease>
    <text>The disease is caused by variants affecting the gene represented in this entry.</text>
</comment>
<comment type="similarity">
    <text evidence="10">Belongs to the flagellar radial spoke RSP3 family.</text>
</comment>
<comment type="sequence caution" evidence="10">
    <conflict type="erroneous initiation">
        <sequence resource="EMBL-CDS" id="AAK26432"/>
    </conflict>
    <text>Truncated N-terminus.</text>
</comment>
<comment type="sequence caution" evidence="10">
    <conflict type="erroneous initiation">
        <sequence resource="EMBL-CDS" id="BAB71544"/>
    </conflict>
    <text>Truncated N-terminus.</text>
</comment>
<proteinExistence type="evidence at protein level"/>
<reference key="1">
    <citation type="journal article" date="2004" name="Nat. Genet.">
        <title>Complete sequencing and characterization of 21,243 full-length human cDNAs.</title>
        <authorList>
            <person name="Ota T."/>
            <person name="Suzuki Y."/>
            <person name="Nishikawa T."/>
            <person name="Otsuki T."/>
            <person name="Sugiyama T."/>
            <person name="Irie R."/>
            <person name="Wakamatsu A."/>
            <person name="Hayashi K."/>
            <person name="Sato H."/>
            <person name="Nagai K."/>
            <person name="Kimura K."/>
            <person name="Makita H."/>
            <person name="Sekine M."/>
            <person name="Obayashi M."/>
            <person name="Nishi T."/>
            <person name="Shibahara T."/>
            <person name="Tanaka T."/>
            <person name="Ishii S."/>
            <person name="Yamamoto J."/>
            <person name="Saito K."/>
            <person name="Kawai Y."/>
            <person name="Isono Y."/>
            <person name="Nakamura Y."/>
            <person name="Nagahari K."/>
            <person name="Murakami K."/>
            <person name="Yasuda T."/>
            <person name="Iwayanagi T."/>
            <person name="Wagatsuma M."/>
            <person name="Shiratori A."/>
            <person name="Sudo H."/>
            <person name="Hosoiri T."/>
            <person name="Kaku Y."/>
            <person name="Kodaira H."/>
            <person name="Kondo H."/>
            <person name="Sugawara M."/>
            <person name="Takahashi M."/>
            <person name="Kanda K."/>
            <person name="Yokoi T."/>
            <person name="Furuya T."/>
            <person name="Kikkawa E."/>
            <person name="Omura Y."/>
            <person name="Abe K."/>
            <person name="Kamihara K."/>
            <person name="Katsuta N."/>
            <person name="Sato K."/>
            <person name="Tanikawa M."/>
            <person name="Yamazaki M."/>
            <person name="Ninomiya K."/>
            <person name="Ishibashi T."/>
            <person name="Yamashita H."/>
            <person name="Murakawa K."/>
            <person name="Fujimori K."/>
            <person name="Tanai H."/>
            <person name="Kimata M."/>
            <person name="Watanabe M."/>
            <person name="Hiraoka S."/>
            <person name="Chiba Y."/>
            <person name="Ishida S."/>
            <person name="Ono Y."/>
            <person name="Takiguchi S."/>
            <person name="Watanabe S."/>
            <person name="Yosida M."/>
            <person name="Hotuta T."/>
            <person name="Kusano J."/>
            <person name="Kanehori K."/>
            <person name="Takahashi-Fujii A."/>
            <person name="Hara H."/>
            <person name="Tanase T.-O."/>
            <person name="Nomura Y."/>
            <person name="Togiya S."/>
            <person name="Komai F."/>
            <person name="Hara R."/>
            <person name="Takeuchi K."/>
            <person name="Arita M."/>
            <person name="Imose N."/>
            <person name="Musashino K."/>
            <person name="Yuuki H."/>
            <person name="Oshima A."/>
            <person name="Sasaki N."/>
            <person name="Aotsuka S."/>
            <person name="Yoshikawa Y."/>
            <person name="Matsunawa H."/>
            <person name="Ichihara T."/>
            <person name="Shiohata N."/>
            <person name="Sano S."/>
            <person name="Moriya S."/>
            <person name="Momiyama H."/>
            <person name="Satoh N."/>
            <person name="Takami S."/>
            <person name="Terashima Y."/>
            <person name="Suzuki O."/>
            <person name="Nakagawa S."/>
            <person name="Senoh A."/>
            <person name="Mizoguchi H."/>
            <person name="Goto Y."/>
            <person name="Shimizu F."/>
            <person name="Wakebe H."/>
            <person name="Hishigaki H."/>
            <person name="Watanabe T."/>
            <person name="Sugiyama A."/>
            <person name="Takemoto M."/>
            <person name="Kawakami B."/>
            <person name="Yamazaki M."/>
            <person name="Watanabe K."/>
            <person name="Kumagai A."/>
            <person name="Itakura S."/>
            <person name="Fukuzumi Y."/>
            <person name="Fujimori Y."/>
            <person name="Komiyama M."/>
            <person name="Tashiro H."/>
            <person name="Tanigami A."/>
            <person name="Fujiwara T."/>
            <person name="Ono T."/>
            <person name="Yamada K."/>
            <person name="Fujii Y."/>
            <person name="Ozaki K."/>
            <person name="Hirao M."/>
            <person name="Ohmori Y."/>
            <person name="Kawabata A."/>
            <person name="Hikiji T."/>
            <person name="Kobatake N."/>
            <person name="Inagaki H."/>
            <person name="Ikema Y."/>
            <person name="Okamoto S."/>
            <person name="Okitani R."/>
            <person name="Kawakami T."/>
            <person name="Noguchi S."/>
            <person name="Itoh T."/>
            <person name="Shigeta K."/>
            <person name="Senba T."/>
            <person name="Matsumura K."/>
            <person name="Nakajima Y."/>
            <person name="Mizuno T."/>
            <person name="Morinaga M."/>
            <person name="Sasaki M."/>
            <person name="Togashi T."/>
            <person name="Oyama M."/>
            <person name="Hata H."/>
            <person name="Watanabe M."/>
            <person name="Komatsu T."/>
            <person name="Mizushima-Sugano J."/>
            <person name="Satoh T."/>
            <person name="Shirai Y."/>
            <person name="Takahashi Y."/>
            <person name="Nakagawa K."/>
            <person name="Okumura K."/>
            <person name="Nagase T."/>
            <person name="Nomura N."/>
            <person name="Kikuchi H."/>
            <person name="Masuho Y."/>
            <person name="Yamashita R."/>
            <person name="Nakai K."/>
            <person name="Yada T."/>
            <person name="Nakamura Y."/>
            <person name="Ohara O."/>
            <person name="Isogai T."/>
            <person name="Sugano S."/>
        </authorList>
    </citation>
    <scope>NUCLEOTIDE SEQUENCE [LARGE SCALE MRNA] (ISOFORM 1)</scope>
    <scope>NUCLEOTIDE SEQUENCE [LARGE SCALE MRNA] OF 66-560 (ISOFORM 2)</scope>
    <source>
        <tissue>Epithelium</tissue>
        <tissue>Trachea</tissue>
    </source>
</reference>
<reference key="2">
    <citation type="journal article" date="2003" name="Nature">
        <title>The DNA sequence and analysis of human chromosome 6.</title>
        <authorList>
            <person name="Mungall A.J."/>
            <person name="Palmer S.A."/>
            <person name="Sims S.K."/>
            <person name="Edwards C.A."/>
            <person name="Ashurst J.L."/>
            <person name="Wilming L."/>
            <person name="Jones M.C."/>
            <person name="Horton R."/>
            <person name="Hunt S.E."/>
            <person name="Scott C.E."/>
            <person name="Gilbert J.G.R."/>
            <person name="Clamp M.E."/>
            <person name="Bethel G."/>
            <person name="Milne S."/>
            <person name="Ainscough R."/>
            <person name="Almeida J.P."/>
            <person name="Ambrose K.D."/>
            <person name="Andrews T.D."/>
            <person name="Ashwell R.I.S."/>
            <person name="Babbage A.K."/>
            <person name="Bagguley C.L."/>
            <person name="Bailey J."/>
            <person name="Banerjee R."/>
            <person name="Barker D.J."/>
            <person name="Barlow K.F."/>
            <person name="Bates K."/>
            <person name="Beare D.M."/>
            <person name="Beasley H."/>
            <person name="Beasley O."/>
            <person name="Bird C.P."/>
            <person name="Blakey S.E."/>
            <person name="Bray-Allen S."/>
            <person name="Brook J."/>
            <person name="Brown A.J."/>
            <person name="Brown J.Y."/>
            <person name="Burford D.C."/>
            <person name="Burrill W."/>
            <person name="Burton J."/>
            <person name="Carder C."/>
            <person name="Carter N.P."/>
            <person name="Chapman J.C."/>
            <person name="Clark S.Y."/>
            <person name="Clark G."/>
            <person name="Clee C.M."/>
            <person name="Clegg S."/>
            <person name="Cobley V."/>
            <person name="Collier R.E."/>
            <person name="Collins J.E."/>
            <person name="Colman L.K."/>
            <person name="Corby N.R."/>
            <person name="Coville G.J."/>
            <person name="Culley K.M."/>
            <person name="Dhami P."/>
            <person name="Davies J."/>
            <person name="Dunn M."/>
            <person name="Earthrowl M.E."/>
            <person name="Ellington A.E."/>
            <person name="Evans K.A."/>
            <person name="Faulkner L."/>
            <person name="Francis M.D."/>
            <person name="Frankish A."/>
            <person name="Frankland J."/>
            <person name="French L."/>
            <person name="Garner P."/>
            <person name="Garnett J."/>
            <person name="Ghori M.J."/>
            <person name="Gilby L.M."/>
            <person name="Gillson C.J."/>
            <person name="Glithero R.J."/>
            <person name="Grafham D.V."/>
            <person name="Grant M."/>
            <person name="Gribble S."/>
            <person name="Griffiths C."/>
            <person name="Griffiths M.N.D."/>
            <person name="Hall R."/>
            <person name="Halls K.S."/>
            <person name="Hammond S."/>
            <person name="Harley J.L."/>
            <person name="Hart E.A."/>
            <person name="Heath P.D."/>
            <person name="Heathcott R."/>
            <person name="Holmes S.J."/>
            <person name="Howden P.J."/>
            <person name="Howe K.L."/>
            <person name="Howell G.R."/>
            <person name="Huckle E."/>
            <person name="Humphray S.J."/>
            <person name="Humphries M.D."/>
            <person name="Hunt A.R."/>
            <person name="Johnson C.M."/>
            <person name="Joy A.A."/>
            <person name="Kay M."/>
            <person name="Keenan S.J."/>
            <person name="Kimberley A.M."/>
            <person name="King A."/>
            <person name="Laird G.K."/>
            <person name="Langford C."/>
            <person name="Lawlor S."/>
            <person name="Leongamornlert D.A."/>
            <person name="Leversha M."/>
            <person name="Lloyd C.R."/>
            <person name="Lloyd D.M."/>
            <person name="Loveland J.E."/>
            <person name="Lovell J."/>
            <person name="Martin S."/>
            <person name="Mashreghi-Mohammadi M."/>
            <person name="Maslen G.L."/>
            <person name="Matthews L."/>
            <person name="McCann O.T."/>
            <person name="McLaren S.J."/>
            <person name="McLay K."/>
            <person name="McMurray A."/>
            <person name="Moore M.J.F."/>
            <person name="Mullikin J.C."/>
            <person name="Niblett D."/>
            <person name="Nickerson T."/>
            <person name="Novik K.L."/>
            <person name="Oliver K."/>
            <person name="Overton-Larty E.K."/>
            <person name="Parker A."/>
            <person name="Patel R."/>
            <person name="Pearce A.V."/>
            <person name="Peck A.I."/>
            <person name="Phillimore B.J.C.T."/>
            <person name="Phillips S."/>
            <person name="Plumb R.W."/>
            <person name="Porter K.M."/>
            <person name="Ramsey Y."/>
            <person name="Ranby S.A."/>
            <person name="Rice C.M."/>
            <person name="Ross M.T."/>
            <person name="Searle S.M."/>
            <person name="Sehra H.K."/>
            <person name="Sheridan E."/>
            <person name="Skuce C.D."/>
            <person name="Smith S."/>
            <person name="Smith M."/>
            <person name="Spraggon L."/>
            <person name="Squares S.L."/>
            <person name="Steward C.A."/>
            <person name="Sycamore N."/>
            <person name="Tamlyn-Hall G."/>
            <person name="Tester J."/>
            <person name="Theaker A.J."/>
            <person name="Thomas D.W."/>
            <person name="Thorpe A."/>
            <person name="Tracey A."/>
            <person name="Tromans A."/>
            <person name="Tubby B."/>
            <person name="Wall M."/>
            <person name="Wallis J.M."/>
            <person name="West A.P."/>
            <person name="White S.S."/>
            <person name="Whitehead S.L."/>
            <person name="Whittaker H."/>
            <person name="Wild A."/>
            <person name="Willey D.J."/>
            <person name="Wilmer T.E."/>
            <person name="Wood J.M."/>
            <person name="Wray P.W."/>
            <person name="Wyatt J.C."/>
            <person name="Young L."/>
            <person name="Younger R.M."/>
            <person name="Bentley D.R."/>
            <person name="Coulson A."/>
            <person name="Durbin R.M."/>
            <person name="Hubbard T."/>
            <person name="Sulston J.E."/>
            <person name="Dunham I."/>
            <person name="Rogers J."/>
            <person name="Beck S."/>
        </authorList>
    </citation>
    <scope>NUCLEOTIDE SEQUENCE [LARGE SCALE GENOMIC DNA]</scope>
</reference>
<reference key="3">
    <citation type="submission" date="2005-09" db="EMBL/GenBank/DDBJ databases">
        <authorList>
            <person name="Mural R.J."/>
            <person name="Istrail S."/>
            <person name="Sutton G.G."/>
            <person name="Florea L."/>
            <person name="Halpern A.L."/>
            <person name="Mobarry C.M."/>
            <person name="Lippert R."/>
            <person name="Walenz B."/>
            <person name="Shatkay H."/>
            <person name="Dew I."/>
            <person name="Miller J.R."/>
            <person name="Flanigan M.J."/>
            <person name="Edwards N.J."/>
            <person name="Bolanos R."/>
            <person name="Fasulo D."/>
            <person name="Halldorsson B.V."/>
            <person name="Hannenhalli S."/>
            <person name="Turner R."/>
            <person name="Yooseph S."/>
            <person name="Lu F."/>
            <person name="Nusskern D.R."/>
            <person name="Shue B.C."/>
            <person name="Zheng X.H."/>
            <person name="Zhong F."/>
            <person name="Delcher A.L."/>
            <person name="Huson D.H."/>
            <person name="Kravitz S.A."/>
            <person name="Mouchard L."/>
            <person name="Reinert K."/>
            <person name="Remington K.A."/>
            <person name="Clark A.G."/>
            <person name="Waterman M.S."/>
            <person name="Eichler E.E."/>
            <person name="Adams M.D."/>
            <person name="Hunkapiller M.W."/>
            <person name="Myers E.W."/>
            <person name="Venter J.C."/>
        </authorList>
    </citation>
    <scope>NUCLEOTIDE SEQUENCE [LARGE SCALE GENOMIC DNA]</scope>
</reference>
<reference key="4">
    <citation type="journal article" date="2004" name="Genome Res.">
        <title>The status, quality, and expansion of the NIH full-length cDNA project: the Mammalian Gene Collection (MGC).</title>
        <authorList>
            <consortium name="The MGC Project Team"/>
        </authorList>
    </citation>
    <scope>NUCLEOTIDE SEQUENCE [LARGE SCALE MRNA] (ISOFORM 1)</scope>
    <source>
        <tissue>Skin</tissue>
    </source>
</reference>
<reference key="5">
    <citation type="submission" date="2001-02" db="EMBL/GenBank/DDBJ databases">
        <title>Molecular characterization of the human radial spoke protein 3 as an A-kinase anchoring protein.</title>
        <authorList>
            <person name="DeKorte M."/>
            <person name="Carr D.W."/>
        </authorList>
    </citation>
    <scope>NUCLEOTIDE SEQUENCE [MRNA] OF 52-560 (ISOFORM 1)</scope>
    <source>
        <tissue>Testis</tissue>
    </source>
</reference>
<reference key="6">
    <citation type="journal article" date="2009" name="J. Biol. Chem.">
        <title>Radial spoke protein 3 is a mammalian protein kinase A-anchoring protein that binds ERK1/2.</title>
        <authorList>
            <person name="Jivan A."/>
            <person name="Earnest S."/>
            <person name="Juang Y.C."/>
            <person name="Cobb M.H."/>
        </authorList>
    </citation>
    <scope>FUNCTION</scope>
    <scope>SUBUNIT</scope>
    <scope>PHOSPHORYLATION AT THR-286</scope>
</reference>
<reference key="7">
    <citation type="journal article" date="2015" name="Am. J. Hum. Genet.">
        <title>RSPH3 mutations cause Primary ciliary dyskinesia with central-complex defects and a near absence of radial spokes.</title>
        <authorList>
            <person name="Jeanson L."/>
            <person name="Copin B."/>
            <person name="Papon J.F."/>
            <person name="Dastot-Le Moal F."/>
            <person name="Duquesnoy P."/>
            <person name="Montantin G."/>
            <person name="Cadranel J."/>
            <person name="Corvol H."/>
            <person name="Coste A."/>
            <person name="Desir J."/>
            <person name="Souayah A."/>
            <person name="Kott E."/>
            <person name="Collot N."/>
            <person name="Tissier S."/>
            <person name="Louis B."/>
            <person name="Tamalet A."/>
            <person name="de Blic J."/>
            <person name="Clement A."/>
            <person name="Escudier E."/>
            <person name="Amselem S."/>
            <person name="Legendre M."/>
        </authorList>
    </citation>
    <scope>INVOLVEMENT IN CILD32</scope>
</reference>
<reference key="8">
    <citation type="journal article" date="2016" name="Hum. Mutat.">
        <title>Mutations in GAS8, a gene encoding a nexin-dynein regulatory complex subunit, cause primary ciliary dyskinesia with axonemal disorganization.</title>
        <authorList>
            <person name="Jeanson L."/>
            <person name="Thomas L."/>
            <person name="Copin B."/>
            <person name="Coste A."/>
            <person name="Sermet-Gaudelus I."/>
            <person name="Dastot-Le Moal F."/>
            <person name="Duquesnoy P."/>
            <person name="Montantin G."/>
            <person name="Collot N."/>
            <person name="Tissier S."/>
            <person name="Papon J.F."/>
            <person name="Clement A."/>
            <person name="Louis B."/>
            <person name="Escudier E."/>
            <person name="Amselem S."/>
            <person name="Legendre M."/>
        </authorList>
    </citation>
    <scope>SUBCELLULAR LOCATION</scope>
</reference>
<reference key="9">
    <citation type="journal article" date="2022" name="Hum. Reprod.">
        <title>IQUB deficiency causes male infertility by affecting the activity of p-ERK1/2/RSPH3.</title>
        <authorList>
            <person name="Zhang Z."/>
            <person name="Zhou H."/>
            <person name="Deng X."/>
            <person name="Zhang R."/>
            <person name="Qu R."/>
            <person name="Mu J."/>
            <person name="Liu R."/>
            <person name="Zeng Y."/>
            <person name="Chen B."/>
            <person name="Wang L."/>
            <person name="Sang Q."/>
            <person name="Bao S."/>
        </authorList>
    </citation>
    <scope>INTERACTION WITH IQUB</scope>
</reference>
<reference key="10">
    <citation type="journal article" date="2023" name="Clin. Genet.">
        <title>LRRC23 deficiency causes male infertility with idiopathic asthenozoospermia by disrupting the assembly of radial spokes.</title>
        <authorList>
            <person name="Li Y."/>
            <person name="Zhang Q."/>
            <person name="Tan Q."/>
            <person name="Sha X."/>
            <person name="Gao Y."/>
            <person name="Hua R."/>
            <person name="Zhou P."/>
            <person name="Wei Z."/>
            <person name="He X."/>
            <person name="Cao Y."/>
            <person name="Li T."/>
            <person name="Wu H."/>
        </authorList>
    </citation>
    <scope>INTERACTION WITH LRRC23</scope>
</reference>
<name>RSPH3_HUMAN</name>
<accession>Q86UC2</accession>
<accession>Q96LQ5</accession>
<accession>Q96LX2</accession>
<accession>Q9BX75</accession>
<evidence type="ECO:0000250" key="1">
    <source>
        <dbReference type="UniProtKB" id="Q9DA80"/>
    </source>
</evidence>
<evidence type="ECO:0000255" key="2"/>
<evidence type="ECO:0000256" key="3">
    <source>
        <dbReference type="SAM" id="MobiDB-lite"/>
    </source>
</evidence>
<evidence type="ECO:0000269" key="4">
    <source>
    </source>
</evidence>
<evidence type="ECO:0000269" key="5">
    <source>
    </source>
</evidence>
<evidence type="ECO:0000269" key="6">
    <source>
    </source>
</evidence>
<evidence type="ECO:0000269" key="7">
    <source>
    </source>
</evidence>
<evidence type="ECO:0000269" key="8">
    <source>
    </source>
</evidence>
<evidence type="ECO:0000303" key="9">
    <source>
    </source>
</evidence>
<evidence type="ECO:0000305" key="10"/>